<accession>Q9XUE7</accession>
<accession>D3YT77</accession>
<accession>E3W754</accession>
<accession>E3W755</accession>
<accession>E3W756</accession>
<accession>E3W757</accession>
<accession>Q86D13</accession>
<dbReference type="EMBL" id="BX284604">
    <property type="protein sequence ID" value="CAB05197.3"/>
    <property type="molecule type" value="Genomic_DNA"/>
</dbReference>
<dbReference type="EMBL" id="BX284604">
    <property type="protein sequence ID" value="CAD89737.1"/>
    <property type="molecule type" value="Genomic_DNA"/>
</dbReference>
<dbReference type="EMBL" id="BX284604">
    <property type="protein sequence ID" value="CBK19450.1"/>
    <property type="molecule type" value="Genomic_DNA"/>
</dbReference>
<dbReference type="EMBL" id="BX284604">
    <property type="protein sequence ID" value="CBX53323.1"/>
    <property type="molecule type" value="Genomic_DNA"/>
</dbReference>
<dbReference type="EMBL" id="BX284604">
    <property type="protein sequence ID" value="CBX53324.1"/>
    <property type="molecule type" value="Genomic_DNA"/>
</dbReference>
<dbReference type="EMBL" id="BX284604">
    <property type="protein sequence ID" value="CBX53325.1"/>
    <property type="molecule type" value="Genomic_DNA"/>
</dbReference>
<dbReference type="EMBL" id="BX284604">
    <property type="protein sequence ID" value="CBX53326.1"/>
    <property type="molecule type" value="Genomic_DNA"/>
</dbReference>
<dbReference type="PIR" id="T22484">
    <property type="entry name" value="T22484"/>
</dbReference>
<dbReference type="RefSeq" id="NP_001023214.1">
    <property type="nucleotide sequence ID" value="NM_001028043.3"/>
</dbReference>
<dbReference type="RefSeq" id="NP_001023215.1">
    <property type="nucleotide sequence ID" value="NM_001028044.3"/>
</dbReference>
<dbReference type="RefSeq" id="NP_001255781.1">
    <property type="nucleotide sequence ID" value="NM_001268852.1"/>
</dbReference>
<dbReference type="RefSeq" id="NP_001255782.1">
    <property type="nucleotide sequence ID" value="NM_001268853.1"/>
</dbReference>
<dbReference type="RefSeq" id="NP_001255783.1">
    <property type="nucleotide sequence ID" value="NM_001268854.1"/>
</dbReference>
<dbReference type="RefSeq" id="NP_001255784.1">
    <molecule id="Q9XUE7-6"/>
    <property type="nucleotide sequence ID" value="NM_001268855.3"/>
</dbReference>
<dbReference type="RefSeq" id="NP_001255785.1">
    <molecule id="Q9XUE7-7"/>
    <property type="nucleotide sequence ID" value="NM_001268856.3"/>
</dbReference>
<dbReference type="RefSeq" id="NP_001367055.1">
    <molecule id="Q9XUE7-2"/>
    <property type="nucleotide sequence ID" value="NM_001380528.2"/>
</dbReference>
<dbReference type="RefSeq" id="NP_001367237.1">
    <molecule id="Q9XUE7-3"/>
    <property type="nucleotide sequence ID" value="NM_001380530.1"/>
</dbReference>
<dbReference type="RefSeq" id="NP_001367271.1">
    <molecule id="Q9XUE7-4"/>
    <property type="nucleotide sequence ID" value="NM_001380529.1"/>
</dbReference>
<dbReference type="RefSeq" id="NP_001367272.1">
    <molecule id="Q9XUE7-5"/>
    <property type="nucleotide sequence ID" value="NM_001380531.1"/>
</dbReference>
<dbReference type="RefSeq" id="NP_001379228.1">
    <molecule id="Q9XUE7-1"/>
    <property type="nucleotide sequence ID" value="NM_001392439.1"/>
</dbReference>
<dbReference type="SMR" id="Q9XUE7"/>
<dbReference type="DIP" id="DIP-26307N"/>
<dbReference type="FunCoup" id="Q9XUE7">
    <property type="interactions" value="14"/>
</dbReference>
<dbReference type="STRING" id="6239.F52B11.1a.2"/>
<dbReference type="PaxDb" id="6239-F52B11.1a.1"/>
<dbReference type="PeptideAtlas" id="Q9XUE7"/>
<dbReference type="EnsemblMetazoa" id="F52B11.1a.1">
    <molecule id="Q9XUE7-1"/>
    <property type="protein sequence ID" value="F52B11.1a.1"/>
    <property type="gene ID" value="WBGene00009924"/>
</dbReference>
<dbReference type="EnsemblMetazoa" id="F52B11.1a.2">
    <molecule id="Q9XUE7-1"/>
    <property type="protein sequence ID" value="F52B11.1a.2"/>
    <property type="gene ID" value="WBGene00009924"/>
</dbReference>
<dbReference type="EnsemblMetazoa" id="F52B11.1b.1">
    <molecule id="Q9XUE7-2"/>
    <property type="protein sequence ID" value="F52B11.1b.1"/>
    <property type="gene ID" value="WBGene00009924"/>
</dbReference>
<dbReference type="EnsemblMetazoa" id="F52B11.1c.1">
    <molecule id="Q9XUE7-3"/>
    <property type="protein sequence ID" value="F52B11.1c.1"/>
    <property type="gene ID" value="WBGene00009924"/>
</dbReference>
<dbReference type="EnsemblMetazoa" id="F52B11.1d.1">
    <molecule id="Q9XUE7-4"/>
    <property type="protein sequence ID" value="F52B11.1d.1"/>
    <property type="gene ID" value="WBGene00009924"/>
</dbReference>
<dbReference type="EnsemblMetazoa" id="F52B11.1e.1">
    <molecule id="Q9XUE7-5"/>
    <property type="protein sequence ID" value="F52B11.1e.1"/>
    <property type="gene ID" value="WBGene00009924"/>
</dbReference>
<dbReference type="EnsemblMetazoa" id="F52B11.1f.1">
    <molecule id="Q9XUE7-6"/>
    <property type="protein sequence ID" value="F52B11.1f.1"/>
    <property type="gene ID" value="WBGene00009924"/>
</dbReference>
<dbReference type="EnsemblMetazoa" id="F52B11.1g.1">
    <molecule id="Q9XUE7-7"/>
    <property type="protein sequence ID" value="F52B11.1g.1"/>
    <property type="gene ID" value="WBGene00009924"/>
</dbReference>
<dbReference type="GeneID" id="178363"/>
<dbReference type="KEGG" id="cel:CELE_F52B11.1"/>
<dbReference type="UCSC" id="F52B11.1a.3">
    <property type="organism name" value="c. elegans"/>
</dbReference>
<dbReference type="AGR" id="WB:WBGene00009924"/>
<dbReference type="CTD" id="178363"/>
<dbReference type="WormBase" id="F52B11.1a">
    <molecule id="Q9XUE7-1"/>
    <property type="protein sequence ID" value="CE33791"/>
    <property type="gene ID" value="WBGene00009924"/>
    <property type="gene designation" value="cfp-1"/>
</dbReference>
<dbReference type="WormBase" id="F52B11.1b">
    <molecule id="Q9XUE7-2"/>
    <property type="protein sequence ID" value="CE33792"/>
    <property type="gene ID" value="WBGene00009924"/>
    <property type="gene designation" value="cfp-1"/>
</dbReference>
<dbReference type="WormBase" id="F52B11.1c">
    <molecule id="Q9XUE7-3"/>
    <property type="protein sequence ID" value="CE44575"/>
    <property type="gene ID" value="WBGene00009924"/>
    <property type="gene designation" value="cfp-1"/>
</dbReference>
<dbReference type="WormBase" id="F52B11.1d">
    <molecule id="Q9XUE7-4"/>
    <property type="protein sequence ID" value="CE45513"/>
    <property type="gene ID" value="WBGene00009924"/>
    <property type="gene designation" value="cfp-1"/>
</dbReference>
<dbReference type="WormBase" id="F52B11.1e">
    <molecule id="Q9XUE7-5"/>
    <property type="protein sequence ID" value="CE45491"/>
    <property type="gene ID" value="WBGene00009924"/>
    <property type="gene designation" value="cfp-1"/>
</dbReference>
<dbReference type="WormBase" id="F52B11.1f">
    <molecule id="Q9XUE7-6"/>
    <property type="protein sequence ID" value="CE45418"/>
    <property type="gene ID" value="WBGene00009924"/>
    <property type="gene designation" value="cfp-1"/>
</dbReference>
<dbReference type="WormBase" id="F52B11.1g">
    <molecule id="Q9XUE7-7"/>
    <property type="protein sequence ID" value="CE45430"/>
    <property type="gene ID" value="WBGene00009924"/>
    <property type="gene designation" value="cfp-1"/>
</dbReference>
<dbReference type="eggNOG" id="KOG1632">
    <property type="taxonomic scope" value="Eukaryota"/>
</dbReference>
<dbReference type="GeneTree" id="ENSGT00940000169358"/>
<dbReference type="HOGENOM" id="CLU_041345_0_0_1"/>
<dbReference type="InParanoid" id="Q9XUE7"/>
<dbReference type="OMA" id="KHIELCW"/>
<dbReference type="OrthoDB" id="419183at2759"/>
<dbReference type="PhylomeDB" id="Q9XUE7"/>
<dbReference type="Reactome" id="R-CEL-9772755">
    <property type="pathway name" value="Formation of WDR5-containing histone-modifying complexes"/>
</dbReference>
<dbReference type="PRO" id="PR:Q9XUE7"/>
<dbReference type="Proteomes" id="UP000001940">
    <property type="component" value="Chromosome IV"/>
</dbReference>
<dbReference type="Bgee" id="WBGene00009924">
    <property type="expression patterns" value="Expressed in embryo and 4 other cell types or tissues"/>
</dbReference>
<dbReference type="ExpressionAtlas" id="Q9XUE7">
    <property type="expression patterns" value="baseline"/>
</dbReference>
<dbReference type="GO" id="GO:0048188">
    <property type="term" value="C:Set1C/COMPASS complex"/>
    <property type="evidence" value="ECO:0000318"/>
    <property type="project" value="GO_Central"/>
</dbReference>
<dbReference type="GO" id="GO:0003677">
    <property type="term" value="F:DNA binding"/>
    <property type="evidence" value="ECO:0007669"/>
    <property type="project" value="UniProtKB-KW"/>
</dbReference>
<dbReference type="GO" id="GO:0035064">
    <property type="term" value="F:methylated histone binding"/>
    <property type="evidence" value="ECO:0000318"/>
    <property type="project" value="GO_Central"/>
</dbReference>
<dbReference type="GO" id="GO:0008270">
    <property type="term" value="F:zinc ion binding"/>
    <property type="evidence" value="ECO:0007669"/>
    <property type="project" value="UniProtKB-KW"/>
</dbReference>
<dbReference type="GO" id="GO:0045893">
    <property type="term" value="P:positive regulation of DNA-templated transcription"/>
    <property type="evidence" value="ECO:0000318"/>
    <property type="project" value="GO_Central"/>
</dbReference>
<dbReference type="GO" id="GO:0060290">
    <property type="term" value="P:transdifferentiation"/>
    <property type="evidence" value="ECO:0000315"/>
    <property type="project" value="WormBase"/>
</dbReference>
<dbReference type="InterPro" id="IPR022056">
    <property type="entry name" value="CpG-bd_C"/>
</dbReference>
<dbReference type="InterPro" id="IPR037869">
    <property type="entry name" value="Spp1/CFP1"/>
</dbReference>
<dbReference type="PANTHER" id="PTHR46174">
    <property type="entry name" value="CXXC-TYPE ZINC FINGER PROTEIN 1"/>
    <property type="match status" value="1"/>
</dbReference>
<dbReference type="PANTHER" id="PTHR46174:SF1">
    <property type="entry name" value="CXXC-TYPE ZINC FINGER PROTEIN 1"/>
    <property type="match status" value="1"/>
</dbReference>
<dbReference type="Pfam" id="PF12269">
    <property type="entry name" value="CpG_bind_C"/>
    <property type="match status" value="1"/>
</dbReference>
<evidence type="ECO:0000250" key="1">
    <source>
        <dbReference type="UniProtKB" id="Q9P0U4"/>
    </source>
</evidence>
<evidence type="ECO:0000255" key="2">
    <source>
        <dbReference type="PROSITE-ProRule" id="PRU00509"/>
    </source>
</evidence>
<evidence type="ECO:0000256" key="3">
    <source>
        <dbReference type="SAM" id="MobiDB-lite"/>
    </source>
</evidence>
<evidence type="ECO:0000269" key="4">
    <source>
    </source>
</evidence>
<evidence type="ECO:0000269" key="5">
    <source>
    </source>
</evidence>
<evidence type="ECO:0000269" key="6">
    <source>
    </source>
</evidence>
<evidence type="ECO:0000303" key="7">
    <source>
    </source>
</evidence>
<evidence type="ECO:0000305" key="8"/>
<evidence type="ECO:0000305" key="9">
    <source>
    </source>
</evidence>
<evidence type="ECO:0000312" key="10">
    <source>
        <dbReference type="Proteomes" id="UP000001940"/>
    </source>
</evidence>
<evidence type="ECO:0000312" key="11">
    <source>
        <dbReference type="WormBase" id="F52B11.1a"/>
    </source>
</evidence>
<evidence type="ECO:0000312" key="12">
    <source>
        <dbReference type="WormBase" id="F52B11.1b"/>
    </source>
</evidence>
<evidence type="ECO:0000312" key="13">
    <source>
        <dbReference type="WormBase" id="F52B11.1c"/>
    </source>
</evidence>
<evidence type="ECO:0000312" key="14">
    <source>
        <dbReference type="WormBase" id="F52B11.1d"/>
    </source>
</evidence>
<evidence type="ECO:0000312" key="15">
    <source>
        <dbReference type="WormBase" id="F52B11.1e"/>
    </source>
</evidence>
<evidence type="ECO:0000312" key="16">
    <source>
        <dbReference type="WormBase" id="F52B11.1f"/>
    </source>
</evidence>
<evidence type="ECO:0000312" key="17">
    <source>
        <dbReference type="WormBase" id="F52B11.1g"/>
    </source>
</evidence>
<protein>
    <recommendedName>
        <fullName evidence="1 7">CXXC-type zinc finger protein 1</fullName>
    </recommendedName>
</protein>
<sequence>MSNKEIEDNEDVWKERCMNCIRCNDEKNCGTCWPCRNGKTCDMRKCFSAKRLYNEKVKRQTDENLKAIMAKTAQREAAHQAATTTAPSAPVVIEQQVEKKKRGRKKGSGNGGAAAAAQQRKANIINERDYVPNRPTRQQSADLRRKRTQLNAEPDKHPRQCLNPNCIYESRIDSKYCSDECGKELARMRLTEILPNRCKQYFFEGPSGGPRSLEDEIKPKRAKINREVQKLTESEKNMMAFLNKLVEFIKTQLKLQPLGTEERYDDNLYEGCIVCGLPDIPLLKYTKHIELCWARSEKAISFGAPEKNNDMFYCEKYDSRTNSFCKRLKSLCPEHRKLGDEQHLKVCGYPKKWEDGMIETAKTVSELIEMEDPFGEEGCRTKKDACHKHHKWIPSLRGTIELEQACLFQKMYELCHEMHKLNAHAEWTTNALSIMMHKQPNIIDSEQMSLFNKSQSTSSSASAHGATTPISSTSSSSSSSSKNDDEMEDTAEFLANLAVQKEEETQNN</sequence>
<reference evidence="10" key="1">
    <citation type="journal article" date="1998" name="Science">
        <title>Genome sequence of the nematode C. elegans: a platform for investigating biology.</title>
        <authorList>
            <consortium name="The C. elegans sequencing consortium"/>
        </authorList>
    </citation>
    <scope>NUCLEOTIDE SEQUENCE [LARGE SCALE GENOMIC DNA]</scope>
    <source>
        <strain evidence="10">Bristol N2</strain>
    </source>
</reference>
<reference evidence="8" key="2">
    <citation type="journal article" date="2014" name="Genome Res.">
        <title>Extreme HOT regions are CpG-dense promoters in C. elegans and humans.</title>
        <authorList>
            <person name="Chen R.A."/>
            <person name="Stempor P."/>
            <person name="Down T.A."/>
            <person name="Zeiser E."/>
            <person name="Feuer S.K."/>
            <person name="Ahringer J."/>
        </authorList>
    </citation>
    <scope>FUNCTION</scope>
</reference>
<reference evidence="8" key="3">
    <citation type="journal article" date="2019" name="FEBS J.">
        <title>CFP-1 interacts with HDAC1/2 complexes in C. elegans development.</title>
        <authorList>
            <person name="Pokhrel B."/>
            <person name="Chen Y."/>
            <person name="Biro J.J."/>
        </authorList>
    </citation>
    <scope>FUNCTION</scope>
</reference>
<reference evidence="8" key="4">
    <citation type="journal article" date="2019" name="Nucleic Acids Res.">
        <title>Physical and functional interaction between SET1/COMPASS complex component CFP-1 and a Sin3S HDAC complex in C. elegans.</title>
        <authorList>
            <person name="Beurton F."/>
            <person name="Stempor P."/>
            <person name="Caron M."/>
            <person name="Appert A."/>
            <person name="Dong Y."/>
            <person name="Chen R.A."/>
            <person name="Cluet D."/>
            <person name="Coute Y."/>
            <person name="Herbette M."/>
            <person name="Huang N."/>
            <person name="Polveche H."/>
            <person name="Spichty M."/>
            <person name="Bedet C."/>
            <person name="Ahringer J."/>
            <person name="Palladino F."/>
        </authorList>
    </citation>
    <scope>FUNCTION</scope>
    <scope>IDENTIFICATION IN THE SET2 COMPLEX</scope>
    <scope>INTERACTION WITH WDR-5.1; ASH-2; DPY-30; HDA-1; SIN-3 AND MRG-1</scope>
    <scope>ASSOCIATION WITH THE SIN3S COMPLEX</scope>
</reference>
<organism evidence="10">
    <name type="scientific">Caenorhabditis elegans</name>
    <dbReference type="NCBI Taxonomy" id="6239"/>
    <lineage>
        <taxon>Eukaryota</taxon>
        <taxon>Metazoa</taxon>
        <taxon>Ecdysozoa</taxon>
        <taxon>Nematoda</taxon>
        <taxon>Chromadorea</taxon>
        <taxon>Rhabditida</taxon>
        <taxon>Rhabditina</taxon>
        <taxon>Rhabditomorpha</taxon>
        <taxon>Rhabditoidea</taxon>
        <taxon>Rhabditidae</taxon>
        <taxon>Peloderinae</taxon>
        <taxon>Caenorhabditis</taxon>
    </lineage>
</organism>
<name>CFP1_CAEEL</name>
<comment type="function">
    <text evidence="4 5 6">Transcriptional activator that exhibits a unique DNA binding specificity for CpG motifs; enriched at promoters containing the trimethylation mark on histone H3 'Lys-4' (H3K4me3) (PubMed:24653213). Forms part of the SET2 complex and interacts with the SIN3S HDAC complex at promoters (PubMed:31602465). Required for H3K4 trimethylation and plays a repressive role in the expression of heat shock and salt-inducible genes (PubMed:30941832). Required for fertility, in cooperation with class I histone deacetylases (HDACs) (PubMed:24653213, PubMed:30941832, PubMed:31602465).</text>
</comment>
<comment type="subunit">
    <text evidence="6">Component of the SET2 complex (also known as the SET1/COMPASS complex), which contains at least set-2, swd-2.1, cfp-1, rbbp-5, wdr-5.1, dpy-30 and ash-2 (PubMed:31602465). Within the complex, interacts with wdr-5.1, ash-2 and dpy-30 (PubMed:31602465). Also interacts with the SIN3S complex, which contains at least sin-3, hda-1, athp-1 and mrg-1 (PubMed:31602465). Interacts with sin-3, hda-1 and mrg-1 (PubMed:31602465).</text>
</comment>
<comment type="subcellular location">
    <subcellularLocation>
        <location evidence="9">Nucleus</location>
    </subcellularLocation>
</comment>
<comment type="alternative products">
    <event type="alternative splicing"/>
    <isoform>
        <id>Q9XUE7-1</id>
        <name evidence="11">a</name>
        <sequence type="displayed"/>
    </isoform>
    <isoform>
        <id>Q9XUE7-2</id>
        <name evidence="12">b</name>
        <sequence type="described" ref="VSP_060819"/>
    </isoform>
    <isoform>
        <id>Q9XUE7-3</id>
        <name evidence="13">c</name>
        <sequence type="described" ref="VSP_060818"/>
    </isoform>
    <isoform>
        <id>Q9XUE7-4</id>
        <name evidence="14">d</name>
        <sequence type="described" ref="VSP_060820"/>
    </isoform>
    <isoform>
        <id>Q9XUE7-5</id>
        <name evidence="15">e</name>
        <sequence type="described" ref="VSP_060817"/>
    </isoform>
    <isoform>
        <id>Q9XUE7-6</id>
        <name evidence="16">f</name>
        <sequence type="described" ref="VSP_060816"/>
    </isoform>
    <isoform>
        <id>Q9XUE7-7</id>
        <name evidence="17">g</name>
        <sequence type="described" ref="VSP_060815"/>
    </isoform>
</comment>
<proteinExistence type="evidence at protein level"/>
<gene>
    <name evidence="11" type="primary">cfp-1</name>
    <name evidence="11" type="ORF">F52B11.1</name>
</gene>
<feature type="chain" id="PRO_0000451595" description="CXXC-type zinc finger protein 1">
    <location>
        <begin position="1"/>
        <end position="508"/>
    </location>
</feature>
<feature type="zinc finger region" description="CXXC-type" evidence="2">
    <location>
        <begin position="10"/>
        <end position="47"/>
    </location>
</feature>
<feature type="region of interest" description="Disordered" evidence="3">
    <location>
        <begin position="95"/>
        <end position="156"/>
    </location>
</feature>
<feature type="region of interest" description="Disordered" evidence="3">
    <location>
        <begin position="453"/>
        <end position="508"/>
    </location>
</feature>
<feature type="compositionally biased region" description="Low complexity" evidence="3">
    <location>
        <begin position="113"/>
        <end position="123"/>
    </location>
</feature>
<feature type="compositionally biased region" description="Low complexity" evidence="3">
    <location>
        <begin position="454"/>
        <end position="481"/>
    </location>
</feature>
<feature type="splice variant" id="VSP_060815" description="In isoform g." evidence="8">
    <location>
        <begin position="1"/>
        <end position="447"/>
    </location>
</feature>
<feature type="splice variant" id="VSP_060816" description="In isoform f." evidence="8">
    <location>
        <begin position="1"/>
        <end position="410"/>
    </location>
</feature>
<feature type="splice variant" id="VSP_060817" description="In isoform e." evidence="8">
    <location>
        <begin position="1"/>
        <end position="310"/>
    </location>
</feature>
<feature type="splice variant" id="VSP_060818" description="In isoform c." evidence="8">
    <location>
        <begin position="1"/>
        <end position="187"/>
    </location>
</feature>
<feature type="splice variant" id="VSP_060819" description="In isoform b." evidence="8">
    <original>MSNKEIEDNEDVWKERCMNCIRCNDEKNCGTCWPCRNGKTCDMRKCFSAKRLYNEKVKRQTDENLKAIMAKTAQREAAHQAATTTAPSAPVVIEQQVEKKKRGRKKGSGNGGAAAAAQQRKANIINERDYVPNRPTRQQSADLRRKRTQLN</original>
    <variation>MKRIVEHVGRVEMEKLVICGNVSQRKDYIMRK</variation>
    <location>
        <begin position="1"/>
        <end position="151"/>
    </location>
</feature>
<feature type="splice variant" id="VSP_060820" description="In isoform d." evidence="8">
    <location>
        <begin position="1"/>
        <end position="68"/>
    </location>
</feature>
<keyword id="KW-0025">Alternative splicing</keyword>
<keyword id="KW-0238">DNA-binding</keyword>
<keyword id="KW-0479">Metal-binding</keyword>
<keyword id="KW-0539">Nucleus</keyword>
<keyword id="KW-1185">Reference proteome</keyword>
<keyword id="KW-0804">Transcription</keyword>
<keyword id="KW-0805">Transcription regulation</keyword>
<keyword id="KW-0862">Zinc</keyword>
<keyword id="KW-0863">Zinc-finger</keyword>